<organism>
    <name type="scientific">Urechis caupo</name>
    <name type="common">Innkeeper worm</name>
    <name type="synonym">Spoonworm</name>
    <dbReference type="NCBI Taxonomy" id="6431"/>
    <lineage>
        <taxon>Eukaryota</taxon>
        <taxon>Metazoa</taxon>
        <taxon>Spiralia</taxon>
        <taxon>Lophotrochozoa</taxon>
        <taxon>Annelida</taxon>
        <taxon>Polychaeta</taxon>
        <taxon>Echiura</taxon>
        <taxon>Xenopneusta</taxon>
        <taxon>Urechidae</taxon>
        <taxon>Urechis</taxon>
    </lineage>
</organism>
<name>H3_URECA</name>
<protein>
    <recommendedName>
        <fullName>Histone H3</fullName>
    </recommendedName>
</protein>
<proteinExistence type="evidence at protein level"/>
<accession>P84239</accession>
<accession>P02295</accession>
<accession>P02297</accession>
<accession>P16105</accession>
<accession>P17269</accession>
<accession>P17320</accession>
<feature type="initiator methionine" description="Removed" evidence="1">
    <location>
        <position position="1"/>
    </location>
</feature>
<feature type="chain" id="PRO_0000221310" description="Histone H3">
    <location>
        <begin position="2"/>
        <end position="136"/>
    </location>
</feature>
<feature type="region of interest" description="Disordered" evidence="2">
    <location>
        <begin position="1"/>
        <end position="43"/>
    </location>
</feature>
<feature type="modified residue" description="N6-methylated lysine" evidence="1">
    <location>
        <position position="5"/>
    </location>
</feature>
<feature type="modified residue" description="N6-acetyllysine; alternate" evidence="1">
    <location>
        <position position="10"/>
    </location>
</feature>
<feature type="modified residue" description="N6-methylated lysine; alternate" evidence="1">
    <location>
        <position position="10"/>
    </location>
</feature>
<feature type="modified residue" description="Phosphoserine" evidence="1">
    <location>
        <position position="11"/>
    </location>
</feature>
<feature type="modified residue" description="N6-acetyllysine" evidence="1">
    <location>
        <position position="15"/>
    </location>
</feature>
<feature type="modified residue" description="N6-acetyllysine" evidence="1">
    <location>
        <position position="24"/>
    </location>
</feature>
<feature type="modified residue" description="N6-methylated lysine" evidence="1">
    <location>
        <position position="28"/>
    </location>
</feature>
<feature type="modified residue" description="N6-methylated lysine" evidence="1">
    <location>
        <position position="37"/>
    </location>
</feature>
<feature type="modified residue" description="N6-methylated lysine" evidence="1">
    <location>
        <position position="80"/>
    </location>
</feature>
<feature type="strand" evidence="4">
    <location>
        <begin position="32"/>
        <end position="34"/>
    </location>
</feature>
<sequence>MARTKQTARKSTGGKAPRKQLATKAARKSAPATGGVKKPHRYRPGTVALREIRRYQKSTELLIRKLPFQRLVREIAQDFKTDLRFQSSAVMALQEASEAYLVGLFEDTNLCAIHAKRVTIMPKDIQLARRIRGERA</sequence>
<evidence type="ECO:0000250" key="1"/>
<evidence type="ECO:0000256" key="2">
    <source>
        <dbReference type="SAM" id="MobiDB-lite"/>
    </source>
</evidence>
<evidence type="ECO:0000305" key="3"/>
<evidence type="ECO:0007829" key="4">
    <source>
        <dbReference type="PDB" id="2P5B"/>
    </source>
</evidence>
<comment type="function">
    <text>Core component of nucleosome. Nucleosomes wrap and compact DNA into chromatin, limiting DNA accessibility to the cellular machineries which require DNA as a template. Histones thereby play a central role in transcription regulation, DNA repair, DNA replication and chromosomal stability. DNA accessibility is regulated via a complex set of post-translational modifications of histones, also called histone code, and nucleosome remodeling.</text>
</comment>
<comment type="subunit">
    <text>The nucleosome is a histone octamer containing two molecules each of H2A, H2B, H3 and H4 assembled in one H3-H4 heterotetramer and two H2A-H2B heterodimers. The octamer wraps approximately 147 bp of DNA.</text>
</comment>
<comment type="subcellular location">
    <subcellularLocation>
        <location evidence="1">Nucleus</location>
    </subcellularLocation>
    <subcellularLocation>
        <location evidence="1">Chromosome</location>
    </subcellularLocation>
</comment>
<comment type="PTM">
    <text evidence="1">Acetylation is generally linked to gene activation.</text>
</comment>
<comment type="PTM">
    <text evidence="1">Methylation at Lys-5 is linked to gene activation. Methylation at Lys-10 is linked to gene repression (By similarity).</text>
</comment>
<comment type="similarity">
    <text evidence="3">Belongs to the histone H3 family.</text>
</comment>
<dbReference type="EMBL" id="X58895">
    <property type="protein sequence ID" value="CAA41696.1"/>
    <property type="molecule type" value="Genomic_DNA"/>
</dbReference>
<dbReference type="PDB" id="2P5B">
    <property type="method" value="X-ray"/>
    <property type="resolution" value="1.99 A"/>
    <property type="chains" value="I/J=27-47"/>
</dbReference>
<dbReference type="PDBsum" id="2P5B"/>
<dbReference type="SMR" id="P84239"/>
<dbReference type="GO" id="GO:0000786">
    <property type="term" value="C:nucleosome"/>
    <property type="evidence" value="ECO:0007669"/>
    <property type="project" value="UniProtKB-KW"/>
</dbReference>
<dbReference type="GO" id="GO:0005634">
    <property type="term" value="C:nucleus"/>
    <property type="evidence" value="ECO:0007669"/>
    <property type="project" value="UniProtKB-SubCell"/>
</dbReference>
<dbReference type="GO" id="GO:0003677">
    <property type="term" value="F:DNA binding"/>
    <property type="evidence" value="ECO:0007669"/>
    <property type="project" value="UniProtKB-KW"/>
</dbReference>
<dbReference type="GO" id="GO:0046982">
    <property type="term" value="F:protein heterodimerization activity"/>
    <property type="evidence" value="ECO:0007669"/>
    <property type="project" value="InterPro"/>
</dbReference>
<dbReference type="GO" id="GO:0030527">
    <property type="term" value="F:structural constituent of chromatin"/>
    <property type="evidence" value="ECO:0007669"/>
    <property type="project" value="InterPro"/>
</dbReference>
<dbReference type="CDD" id="cd22911">
    <property type="entry name" value="HFD_H3"/>
    <property type="match status" value="1"/>
</dbReference>
<dbReference type="FunFam" id="1.10.20.10:FF:000078">
    <property type="entry name" value="Histone H3"/>
    <property type="match status" value="1"/>
</dbReference>
<dbReference type="FunFam" id="1.10.20.10:FF:000044">
    <property type="entry name" value="Histone H3.3"/>
    <property type="match status" value="1"/>
</dbReference>
<dbReference type="Gene3D" id="1.10.20.10">
    <property type="entry name" value="Histone, subunit A"/>
    <property type="match status" value="1"/>
</dbReference>
<dbReference type="InterPro" id="IPR009072">
    <property type="entry name" value="Histone-fold"/>
</dbReference>
<dbReference type="InterPro" id="IPR007125">
    <property type="entry name" value="Histone_H2A/H2B/H3"/>
</dbReference>
<dbReference type="InterPro" id="IPR000164">
    <property type="entry name" value="Histone_H3/CENP-A"/>
</dbReference>
<dbReference type="PANTHER" id="PTHR11426">
    <property type="entry name" value="HISTONE H3"/>
    <property type="match status" value="1"/>
</dbReference>
<dbReference type="Pfam" id="PF00125">
    <property type="entry name" value="Histone"/>
    <property type="match status" value="1"/>
</dbReference>
<dbReference type="PRINTS" id="PR00622">
    <property type="entry name" value="HISTONEH3"/>
</dbReference>
<dbReference type="SMART" id="SM00428">
    <property type="entry name" value="H3"/>
    <property type="match status" value="1"/>
</dbReference>
<dbReference type="SUPFAM" id="SSF47113">
    <property type="entry name" value="Histone-fold"/>
    <property type="match status" value="1"/>
</dbReference>
<dbReference type="PROSITE" id="PS00322">
    <property type="entry name" value="HISTONE_H3_1"/>
    <property type="match status" value="1"/>
</dbReference>
<dbReference type="PROSITE" id="PS00959">
    <property type="entry name" value="HISTONE_H3_2"/>
    <property type="match status" value="1"/>
</dbReference>
<keyword id="KW-0002">3D-structure</keyword>
<keyword id="KW-0007">Acetylation</keyword>
<keyword id="KW-0158">Chromosome</keyword>
<keyword id="KW-0238">DNA-binding</keyword>
<keyword id="KW-0488">Methylation</keyword>
<keyword id="KW-0544">Nucleosome core</keyword>
<keyword id="KW-0539">Nucleus</keyword>
<keyword id="KW-0597">Phosphoprotein</keyword>
<reference key="1">
    <citation type="journal article" date="1992" name="DNA Seq.">
        <title>Nucleotide sequence of the Urechis caupo core histone gene tandem repeat.</title>
        <authorList>
            <person name="Davis F.C."/>
            <person name="Shelton J.C."/>
            <person name="Ingham L.D."/>
        </authorList>
    </citation>
    <scope>NUCLEOTIDE SEQUENCE [GENOMIC DNA]</scope>
    <source>
        <tissue>Sperm</tissue>
    </source>
</reference>